<organism>
    <name type="scientific">Schizosaccharomyces pombe (strain 972 / ATCC 24843)</name>
    <name type="common">Fission yeast</name>
    <dbReference type="NCBI Taxonomy" id="284812"/>
    <lineage>
        <taxon>Eukaryota</taxon>
        <taxon>Fungi</taxon>
        <taxon>Dikarya</taxon>
        <taxon>Ascomycota</taxon>
        <taxon>Taphrinomycotina</taxon>
        <taxon>Schizosaccharomycetes</taxon>
        <taxon>Schizosaccharomycetales</taxon>
        <taxon>Schizosaccharomycetaceae</taxon>
        <taxon>Schizosaccharomyces</taxon>
    </lineage>
</organism>
<protein>
    <recommendedName>
        <fullName>Uncharacterized protein C25H2.10c</fullName>
    </recommendedName>
</protein>
<accession>P87151</accession>
<accession>Q7LGJ1</accession>
<evidence type="ECO:0000255" key="1">
    <source>
        <dbReference type="PROSITE-ProRule" id="PRU00529"/>
    </source>
</evidence>
<evidence type="ECO:0000256" key="2">
    <source>
        <dbReference type="SAM" id="MobiDB-lite"/>
    </source>
</evidence>
<reference key="1">
    <citation type="journal article" date="2002" name="Nature">
        <title>The genome sequence of Schizosaccharomyces pombe.</title>
        <authorList>
            <person name="Wood V."/>
            <person name="Gwilliam R."/>
            <person name="Rajandream M.A."/>
            <person name="Lyne M.H."/>
            <person name="Lyne R."/>
            <person name="Stewart A."/>
            <person name="Sgouros J.G."/>
            <person name="Peat N."/>
            <person name="Hayles J."/>
            <person name="Baker S.G."/>
            <person name="Basham D."/>
            <person name="Bowman S."/>
            <person name="Brooks K."/>
            <person name="Brown D."/>
            <person name="Brown S."/>
            <person name="Chillingworth T."/>
            <person name="Churcher C.M."/>
            <person name="Collins M."/>
            <person name="Connor R."/>
            <person name="Cronin A."/>
            <person name="Davis P."/>
            <person name="Feltwell T."/>
            <person name="Fraser A."/>
            <person name="Gentles S."/>
            <person name="Goble A."/>
            <person name="Hamlin N."/>
            <person name="Harris D.E."/>
            <person name="Hidalgo J."/>
            <person name="Hodgson G."/>
            <person name="Holroyd S."/>
            <person name="Hornsby T."/>
            <person name="Howarth S."/>
            <person name="Huckle E.J."/>
            <person name="Hunt S."/>
            <person name="Jagels K."/>
            <person name="James K.D."/>
            <person name="Jones L."/>
            <person name="Jones M."/>
            <person name="Leather S."/>
            <person name="McDonald S."/>
            <person name="McLean J."/>
            <person name="Mooney P."/>
            <person name="Moule S."/>
            <person name="Mungall K.L."/>
            <person name="Murphy L.D."/>
            <person name="Niblett D."/>
            <person name="Odell C."/>
            <person name="Oliver K."/>
            <person name="O'Neil S."/>
            <person name="Pearson D."/>
            <person name="Quail M.A."/>
            <person name="Rabbinowitsch E."/>
            <person name="Rutherford K.M."/>
            <person name="Rutter S."/>
            <person name="Saunders D."/>
            <person name="Seeger K."/>
            <person name="Sharp S."/>
            <person name="Skelton J."/>
            <person name="Simmonds M.N."/>
            <person name="Squares R."/>
            <person name="Squares S."/>
            <person name="Stevens K."/>
            <person name="Taylor K."/>
            <person name="Taylor R.G."/>
            <person name="Tivey A."/>
            <person name="Walsh S.V."/>
            <person name="Warren T."/>
            <person name="Whitehead S."/>
            <person name="Woodward J.R."/>
            <person name="Volckaert G."/>
            <person name="Aert R."/>
            <person name="Robben J."/>
            <person name="Grymonprez B."/>
            <person name="Weltjens I."/>
            <person name="Vanstreels E."/>
            <person name="Rieger M."/>
            <person name="Schaefer M."/>
            <person name="Mueller-Auer S."/>
            <person name="Gabel C."/>
            <person name="Fuchs M."/>
            <person name="Duesterhoeft A."/>
            <person name="Fritzc C."/>
            <person name="Holzer E."/>
            <person name="Moestl D."/>
            <person name="Hilbert H."/>
            <person name="Borzym K."/>
            <person name="Langer I."/>
            <person name="Beck A."/>
            <person name="Lehrach H."/>
            <person name="Reinhardt R."/>
            <person name="Pohl T.M."/>
            <person name="Eger P."/>
            <person name="Zimmermann W."/>
            <person name="Wedler H."/>
            <person name="Wambutt R."/>
            <person name="Purnelle B."/>
            <person name="Goffeau A."/>
            <person name="Cadieu E."/>
            <person name="Dreano S."/>
            <person name="Gloux S."/>
            <person name="Lelaure V."/>
            <person name="Mottier S."/>
            <person name="Galibert F."/>
            <person name="Aves S.J."/>
            <person name="Xiang Z."/>
            <person name="Hunt C."/>
            <person name="Moore K."/>
            <person name="Hurst S.M."/>
            <person name="Lucas M."/>
            <person name="Rochet M."/>
            <person name="Gaillardin C."/>
            <person name="Tallada V.A."/>
            <person name="Garzon A."/>
            <person name="Thode G."/>
            <person name="Daga R.R."/>
            <person name="Cruzado L."/>
            <person name="Jimenez J."/>
            <person name="Sanchez M."/>
            <person name="del Rey F."/>
            <person name="Benito J."/>
            <person name="Dominguez A."/>
            <person name="Revuelta J.L."/>
            <person name="Moreno S."/>
            <person name="Armstrong J."/>
            <person name="Forsburg S.L."/>
            <person name="Cerutti L."/>
            <person name="Lowe T."/>
            <person name="McCombie W.R."/>
            <person name="Paulsen I."/>
            <person name="Potashkin J."/>
            <person name="Shpakovski G.V."/>
            <person name="Ussery D."/>
            <person name="Barrell B.G."/>
            <person name="Nurse P."/>
        </authorList>
    </citation>
    <scope>NUCLEOTIDE SEQUENCE [LARGE SCALE GENOMIC DNA]</scope>
    <source>
        <strain>972 / ATCC 24843</strain>
    </source>
</reference>
<keyword id="KW-1185">Reference proteome</keyword>
<proteinExistence type="predicted"/>
<gene>
    <name type="ORF">SPBC25H2.10c</name>
</gene>
<dbReference type="EMBL" id="CU329671">
    <property type="protein sequence ID" value="CAB08786.3"/>
    <property type="molecule type" value="Genomic_DNA"/>
</dbReference>
<dbReference type="PIR" id="T40005">
    <property type="entry name" value="T40005"/>
</dbReference>
<dbReference type="BioGRID" id="280405">
    <property type="interactions" value="15"/>
</dbReference>
<dbReference type="FunCoup" id="P87151">
    <property type="interactions" value="670"/>
</dbReference>
<dbReference type="STRING" id="284812.P87151"/>
<dbReference type="PaxDb" id="4896-SPBC25H2.10c.1"/>
<dbReference type="EnsemblFungi" id="SPBC25H2.10c.1">
    <property type="protein sequence ID" value="SPBC25H2.10c.1:pep"/>
    <property type="gene ID" value="SPBC25H2.10c"/>
</dbReference>
<dbReference type="KEGG" id="spo:3361329"/>
<dbReference type="PomBase" id="SPBC25H2.10c"/>
<dbReference type="VEuPathDB" id="FungiDB:SPBC25H2.10c"/>
<dbReference type="eggNOG" id="KOG3943">
    <property type="taxonomic scope" value="Eukaryota"/>
</dbReference>
<dbReference type="HOGENOM" id="CLU_039352_2_0_1"/>
<dbReference type="InParanoid" id="P87151"/>
<dbReference type="OMA" id="MNEKACV"/>
<dbReference type="PhylomeDB" id="P87151"/>
<dbReference type="PRO" id="PR:P87151"/>
<dbReference type="Proteomes" id="UP000002485">
    <property type="component" value="Chromosome II"/>
</dbReference>
<dbReference type="GO" id="GO:0005737">
    <property type="term" value="C:cytoplasm"/>
    <property type="evidence" value="ECO:0000266"/>
    <property type="project" value="PomBase"/>
</dbReference>
<dbReference type="GO" id="GO:0005634">
    <property type="term" value="C:nucleus"/>
    <property type="evidence" value="ECO:0000266"/>
    <property type="project" value="PomBase"/>
</dbReference>
<dbReference type="GO" id="GO:0180014">
    <property type="term" value="F:protein-tRNA adaptor activity"/>
    <property type="evidence" value="ECO:0000315"/>
    <property type="project" value="PomBase"/>
</dbReference>
<dbReference type="GO" id="GO:0003723">
    <property type="term" value="F:RNA binding"/>
    <property type="evidence" value="ECO:0000318"/>
    <property type="project" value="GO_Central"/>
</dbReference>
<dbReference type="GO" id="GO:0051391">
    <property type="term" value="P:tRNA acetylation"/>
    <property type="evidence" value="ECO:0000250"/>
    <property type="project" value="PomBase"/>
</dbReference>
<dbReference type="GO" id="GO:0006400">
    <property type="term" value="P:tRNA modification"/>
    <property type="evidence" value="ECO:0000318"/>
    <property type="project" value="GO_Central"/>
</dbReference>
<dbReference type="CDD" id="cd11717">
    <property type="entry name" value="THUMP_THUMPD1_like"/>
    <property type="match status" value="1"/>
</dbReference>
<dbReference type="FunFam" id="3.30.2300.10:FF:000001">
    <property type="entry name" value="THUMP domain-containing protein 1"/>
    <property type="match status" value="1"/>
</dbReference>
<dbReference type="Gene3D" id="3.30.2300.10">
    <property type="entry name" value="THUMP superfamily"/>
    <property type="match status" value="1"/>
</dbReference>
<dbReference type="InterPro" id="IPR004114">
    <property type="entry name" value="THUMP_dom"/>
</dbReference>
<dbReference type="InterPro" id="IPR040183">
    <property type="entry name" value="THUMPD1-like"/>
</dbReference>
<dbReference type="PANTHER" id="PTHR13452">
    <property type="entry name" value="THUMP DOMAIN CONTAINING PROTEIN 1-RELATED"/>
    <property type="match status" value="1"/>
</dbReference>
<dbReference type="PANTHER" id="PTHR13452:SF10">
    <property type="entry name" value="THUMP DOMAIN-CONTAINING PROTEIN 1"/>
    <property type="match status" value="1"/>
</dbReference>
<dbReference type="Pfam" id="PF02926">
    <property type="entry name" value="THUMP"/>
    <property type="match status" value="1"/>
</dbReference>
<dbReference type="SMART" id="SM00981">
    <property type="entry name" value="THUMP"/>
    <property type="match status" value="1"/>
</dbReference>
<dbReference type="SUPFAM" id="SSF143437">
    <property type="entry name" value="THUMP domain-like"/>
    <property type="match status" value="1"/>
</dbReference>
<dbReference type="PROSITE" id="PS51165">
    <property type="entry name" value="THUMP"/>
    <property type="match status" value="1"/>
</dbReference>
<name>YB0A_SCHPO</name>
<sequence>MSALSEILSYLIISFETSFTFHLEFKYKRTGIEKNESGVLVTVPRGKERQSSSEILDVFTQHIATLWPETQSSDQENEEEGEELEDAVAKEINSLQKKNKKELLTPIMLDMPCVYFVKTRPPIDPVRLVEFTCEVGKTKKMTRYTQRLIPIVRTTGVSLDDLEELAKSLIDPLFHEGQEGIKEFAVQANIRNHTVLKKDDIYRTVARIVGKQHMVDLKNFKLLILVQVIKNIIGISIVQNFEELRRFNLNEVYKQPENTKSIPNDSKLDNFDRDKNQIINDKAEHAE</sequence>
<feature type="chain" id="PRO_0000116492" description="Uncharacterized protein C25H2.10c">
    <location>
        <begin position="1"/>
        <end position="287"/>
    </location>
</feature>
<feature type="domain" description="THUMP" evidence="1">
    <location>
        <begin position="133"/>
        <end position="239"/>
    </location>
</feature>
<feature type="region of interest" description="Disordered" evidence="2">
    <location>
        <begin position="257"/>
        <end position="287"/>
    </location>
</feature>
<feature type="compositionally biased region" description="Basic and acidic residues" evidence="2">
    <location>
        <begin position="266"/>
        <end position="287"/>
    </location>
</feature>